<proteinExistence type="predicted"/>
<reference key="1">
    <citation type="journal article" date="2002" name="Nature">
        <title>The genome sequence of Schizosaccharomyces pombe.</title>
        <authorList>
            <person name="Wood V."/>
            <person name="Gwilliam R."/>
            <person name="Rajandream M.A."/>
            <person name="Lyne M.H."/>
            <person name="Lyne R."/>
            <person name="Stewart A."/>
            <person name="Sgouros J.G."/>
            <person name="Peat N."/>
            <person name="Hayles J."/>
            <person name="Baker S.G."/>
            <person name="Basham D."/>
            <person name="Bowman S."/>
            <person name="Brooks K."/>
            <person name="Brown D."/>
            <person name="Brown S."/>
            <person name="Chillingworth T."/>
            <person name="Churcher C.M."/>
            <person name="Collins M."/>
            <person name="Connor R."/>
            <person name="Cronin A."/>
            <person name="Davis P."/>
            <person name="Feltwell T."/>
            <person name="Fraser A."/>
            <person name="Gentles S."/>
            <person name="Goble A."/>
            <person name="Hamlin N."/>
            <person name="Harris D.E."/>
            <person name="Hidalgo J."/>
            <person name="Hodgson G."/>
            <person name="Holroyd S."/>
            <person name="Hornsby T."/>
            <person name="Howarth S."/>
            <person name="Huckle E.J."/>
            <person name="Hunt S."/>
            <person name="Jagels K."/>
            <person name="James K.D."/>
            <person name="Jones L."/>
            <person name="Jones M."/>
            <person name="Leather S."/>
            <person name="McDonald S."/>
            <person name="McLean J."/>
            <person name="Mooney P."/>
            <person name="Moule S."/>
            <person name="Mungall K.L."/>
            <person name="Murphy L.D."/>
            <person name="Niblett D."/>
            <person name="Odell C."/>
            <person name="Oliver K."/>
            <person name="O'Neil S."/>
            <person name="Pearson D."/>
            <person name="Quail M.A."/>
            <person name="Rabbinowitsch E."/>
            <person name="Rutherford K.M."/>
            <person name="Rutter S."/>
            <person name="Saunders D."/>
            <person name="Seeger K."/>
            <person name="Sharp S."/>
            <person name="Skelton J."/>
            <person name="Simmonds M.N."/>
            <person name="Squares R."/>
            <person name="Squares S."/>
            <person name="Stevens K."/>
            <person name="Taylor K."/>
            <person name="Taylor R.G."/>
            <person name="Tivey A."/>
            <person name="Walsh S.V."/>
            <person name="Warren T."/>
            <person name="Whitehead S."/>
            <person name="Woodward J.R."/>
            <person name="Volckaert G."/>
            <person name="Aert R."/>
            <person name="Robben J."/>
            <person name="Grymonprez B."/>
            <person name="Weltjens I."/>
            <person name="Vanstreels E."/>
            <person name="Rieger M."/>
            <person name="Schaefer M."/>
            <person name="Mueller-Auer S."/>
            <person name="Gabel C."/>
            <person name="Fuchs M."/>
            <person name="Duesterhoeft A."/>
            <person name="Fritzc C."/>
            <person name="Holzer E."/>
            <person name="Moestl D."/>
            <person name="Hilbert H."/>
            <person name="Borzym K."/>
            <person name="Langer I."/>
            <person name="Beck A."/>
            <person name="Lehrach H."/>
            <person name="Reinhardt R."/>
            <person name="Pohl T.M."/>
            <person name="Eger P."/>
            <person name="Zimmermann W."/>
            <person name="Wedler H."/>
            <person name="Wambutt R."/>
            <person name="Purnelle B."/>
            <person name="Goffeau A."/>
            <person name="Cadieu E."/>
            <person name="Dreano S."/>
            <person name="Gloux S."/>
            <person name="Lelaure V."/>
            <person name="Mottier S."/>
            <person name="Galibert F."/>
            <person name="Aves S.J."/>
            <person name="Xiang Z."/>
            <person name="Hunt C."/>
            <person name="Moore K."/>
            <person name="Hurst S.M."/>
            <person name="Lucas M."/>
            <person name="Rochet M."/>
            <person name="Gaillardin C."/>
            <person name="Tallada V.A."/>
            <person name="Garzon A."/>
            <person name="Thode G."/>
            <person name="Daga R.R."/>
            <person name="Cruzado L."/>
            <person name="Jimenez J."/>
            <person name="Sanchez M."/>
            <person name="del Rey F."/>
            <person name="Benito J."/>
            <person name="Dominguez A."/>
            <person name="Revuelta J.L."/>
            <person name="Moreno S."/>
            <person name="Armstrong J."/>
            <person name="Forsburg S.L."/>
            <person name="Cerutti L."/>
            <person name="Lowe T."/>
            <person name="McCombie W.R."/>
            <person name="Paulsen I."/>
            <person name="Potashkin J."/>
            <person name="Shpakovski G.V."/>
            <person name="Ussery D."/>
            <person name="Barrell B.G."/>
            <person name="Nurse P."/>
        </authorList>
    </citation>
    <scope>NUCLEOTIDE SEQUENCE [LARGE SCALE GENOMIC DNA]</scope>
    <source>
        <strain>972 / ATCC 24843</strain>
    </source>
</reference>
<reference key="2">
    <citation type="journal article" date="2011" name="Science">
        <title>Comparative functional genomics of the fission yeasts.</title>
        <authorList>
            <person name="Rhind N."/>
            <person name="Chen Z."/>
            <person name="Yassour M."/>
            <person name="Thompson D.A."/>
            <person name="Haas B.J."/>
            <person name="Habib N."/>
            <person name="Wapinski I."/>
            <person name="Roy S."/>
            <person name="Lin M.F."/>
            <person name="Heiman D.I."/>
            <person name="Young S.K."/>
            <person name="Furuya K."/>
            <person name="Guo Y."/>
            <person name="Pidoux A."/>
            <person name="Chen H.M."/>
            <person name="Robbertse B."/>
            <person name="Goldberg J.M."/>
            <person name="Aoki K."/>
            <person name="Bayne E.H."/>
            <person name="Berlin A.M."/>
            <person name="Desjardins C.A."/>
            <person name="Dobbs E."/>
            <person name="Dukaj L."/>
            <person name="Fan L."/>
            <person name="FitzGerald M.G."/>
            <person name="French C."/>
            <person name="Gujja S."/>
            <person name="Hansen K."/>
            <person name="Keifenheim D."/>
            <person name="Levin J.Z."/>
            <person name="Mosher R.A."/>
            <person name="Mueller C.A."/>
            <person name="Pfiffner J."/>
            <person name="Priest M."/>
            <person name="Russ C."/>
            <person name="Smialowska A."/>
            <person name="Swoboda P."/>
            <person name="Sykes S.M."/>
            <person name="Vaughn M."/>
            <person name="Vengrova S."/>
            <person name="Yoder R."/>
            <person name="Zeng Q."/>
            <person name="Allshire R."/>
            <person name="Baulcombe D."/>
            <person name="Birren B.W."/>
            <person name="Brown W."/>
            <person name="Ekwall K."/>
            <person name="Kellis M."/>
            <person name="Leatherwood J."/>
            <person name="Levin H."/>
            <person name="Margalit H."/>
            <person name="Martienssen R."/>
            <person name="Nieduszynski C.A."/>
            <person name="Spatafora J.W."/>
            <person name="Friedman N."/>
            <person name="Dalgaard J.Z."/>
            <person name="Baumann P."/>
            <person name="Niki H."/>
            <person name="Regev A."/>
            <person name="Nusbaum C."/>
        </authorList>
    </citation>
    <scope>IDENTIFICATION</scope>
</reference>
<feature type="chain" id="PRO_0000416651" description="Putative uncharacterized protein C2H10.04">
    <location>
        <begin position="1"/>
        <end position="124"/>
    </location>
</feature>
<protein>
    <recommendedName>
        <fullName>Putative uncharacterized protein C2H10.04</fullName>
    </recommendedName>
</protein>
<dbReference type="EMBL" id="CU329670">
    <property type="protein sequence ID" value="CCD31344.1"/>
    <property type="molecule type" value="Genomic_DNA"/>
</dbReference>
<dbReference type="RefSeq" id="XP_004001799.1">
    <property type="nucleotide sequence ID" value="XM_004001750.1"/>
</dbReference>
<dbReference type="iPTMnet" id="G2TRK3"/>
<dbReference type="PaxDb" id="4896-SPAC2H10.04.1"/>
<dbReference type="EnsemblFungi" id="SPAC2H10.04.1">
    <property type="protein sequence ID" value="SPAC2H10.04.1:pep"/>
    <property type="gene ID" value="SPAC2H10.04"/>
</dbReference>
<dbReference type="PomBase" id="SPAC2H10.04"/>
<dbReference type="VEuPathDB" id="FungiDB:SPAC2H10.04"/>
<dbReference type="HOGENOM" id="CLU_2005242_0_0_1"/>
<dbReference type="InParanoid" id="G2TRK3"/>
<dbReference type="PRO" id="PR:G2TRK3"/>
<dbReference type="Proteomes" id="UP000002485">
    <property type="component" value="Chromosome I"/>
</dbReference>
<gene>
    <name type="ORF">SPAC2H10.04</name>
</gene>
<accession>G2TRK3</accession>
<keyword id="KW-1185">Reference proteome</keyword>
<sequence>MPFLYMLFLTVTVKLLNSTENFLFHKFFFSFFTLLSSPYVYPFFFSLLVLTIPYHTILSYPVLYNTIPYHTIPYLTMPCLALHFRLQPTLLLQWCPLRQCALPFQSHLLFTPRFLLPQITGIFE</sequence>
<name>YLV4_SCHPO</name>
<organism>
    <name type="scientific">Schizosaccharomyces pombe (strain 972 / ATCC 24843)</name>
    <name type="common">Fission yeast</name>
    <dbReference type="NCBI Taxonomy" id="284812"/>
    <lineage>
        <taxon>Eukaryota</taxon>
        <taxon>Fungi</taxon>
        <taxon>Dikarya</taxon>
        <taxon>Ascomycota</taxon>
        <taxon>Taphrinomycotina</taxon>
        <taxon>Schizosaccharomycetes</taxon>
        <taxon>Schizosaccharomycetales</taxon>
        <taxon>Schizosaccharomycetaceae</taxon>
        <taxon>Schizosaccharomyces</taxon>
    </lineage>
</organism>